<gene>
    <name evidence="4 9" type="primary">IGHV3-64</name>
</gene>
<organism>
    <name type="scientific">Homo sapiens</name>
    <name type="common">Human</name>
    <dbReference type="NCBI Taxonomy" id="9606"/>
    <lineage>
        <taxon>Eukaryota</taxon>
        <taxon>Metazoa</taxon>
        <taxon>Chordata</taxon>
        <taxon>Craniata</taxon>
        <taxon>Vertebrata</taxon>
        <taxon>Euteleostomi</taxon>
        <taxon>Mammalia</taxon>
        <taxon>Eutheria</taxon>
        <taxon>Euarchontoglires</taxon>
        <taxon>Primates</taxon>
        <taxon>Haplorrhini</taxon>
        <taxon>Catarrhini</taxon>
        <taxon>Hominidae</taxon>
        <taxon>Homo</taxon>
    </lineage>
</organism>
<keyword id="KW-1064">Adaptive immunity</keyword>
<keyword id="KW-1003">Cell membrane</keyword>
<keyword id="KW-1015">Disulfide bond</keyword>
<keyword id="KW-0391">Immunity</keyword>
<keyword id="KW-1280">Immunoglobulin</keyword>
<keyword id="KW-0393">Immunoglobulin domain</keyword>
<keyword id="KW-0472">Membrane</keyword>
<keyword id="KW-1267">Proteomics identification</keyword>
<keyword id="KW-1185">Reference proteome</keyword>
<keyword id="KW-0964">Secreted</keyword>
<keyword id="KW-0732">Signal</keyword>
<name>HV364_HUMAN</name>
<proteinExistence type="evidence at protein level"/>
<feature type="signal peptide" evidence="2">
    <location>
        <begin position="1"/>
        <end position="20"/>
    </location>
</feature>
<feature type="chain" id="PRO_5007754396" description="Immunoglobulin heavy variable 3-64" evidence="2">
    <location>
        <begin position="21"/>
        <end position="118"/>
    </location>
</feature>
<feature type="domain" description="Ig-like" evidence="3">
    <location>
        <begin position="21"/>
        <end position="118" status="greater than"/>
    </location>
</feature>
<feature type="region of interest" description="Framework-1" evidence="1">
    <location>
        <begin position="21"/>
        <end position="45"/>
    </location>
</feature>
<feature type="region of interest" description="Complementarity-determining-1" evidence="1">
    <location>
        <begin position="46"/>
        <end position="53"/>
    </location>
</feature>
<feature type="region of interest" description="Framework-2" evidence="1">
    <location>
        <begin position="54"/>
        <end position="70"/>
    </location>
</feature>
<feature type="region of interest" description="Complementarity-determining-2" evidence="1">
    <location>
        <begin position="71"/>
        <end position="78"/>
    </location>
</feature>
<feature type="region of interest" description="Framework-3" evidence="1">
    <location>
        <begin position="79"/>
        <end position="116"/>
    </location>
</feature>
<feature type="region of interest" description="Complementarity-determining-3" evidence="1">
    <location>
        <begin position="117"/>
        <end position="118" status="greater than"/>
    </location>
</feature>
<feature type="disulfide bond" evidence="3">
    <location>
        <begin position="42"/>
        <end position="116"/>
    </location>
</feature>
<feature type="non-terminal residue">
    <location>
        <position position="118"/>
    </location>
</feature>
<sequence length="118" mass="12891">MMEFGLSWVFLVAIFKGVQCEVQLVESGEGLVQPGGSLRLSCAASGFTFSSYAMHWVRQAPGKGLEYVSAISSNGGSTYYADSVKGRFTISRDNSKNTLYLQMGSLRAEDMAVYYCAR</sequence>
<dbReference type="EMBL" id="AC245369">
    <property type="status" value="NOT_ANNOTATED_CDS"/>
    <property type="molecule type" value="Genomic_DNA"/>
</dbReference>
<dbReference type="EMDB" id="EMD-30487"/>
<dbReference type="SMR" id="A0A075B6Q5"/>
<dbReference type="FunCoup" id="A0A075B6Q5">
    <property type="interactions" value="326"/>
</dbReference>
<dbReference type="IMGT_GENE-DB" id="IGHV3-64"/>
<dbReference type="BioMuta" id="IGHV3-64"/>
<dbReference type="MassIVE" id="A0A075B6Q5"/>
<dbReference type="Ensembl" id="ENST00000454421.2">
    <property type="protein sequence ID" value="ENSP00000401707.2"/>
    <property type="gene ID" value="ENSG00000223648.4"/>
</dbReference>
<dbReference type="Ensembl" id="ENST00000631710.1">
    <property type="protein sequence ID" value="ENSP00000488676.1"/>
    <property type="gene ID" value="ENSG00000274236.3"/>
</dbReference>
<dbReference type="UCSC" id="uc059ghb.1">
    <property type="organism name" value="human"/>
</dbReference>
<dbReference type="AGR" id="HGNC:5617"/>
<dbReference type="GeneCards" id="IGHV3-64"/>
<dbReference type="HGNC" id="HGNC:5617">
    <property type="gene designation" value="IGHV3-64"/>
</dbReference>
<dbReference type="HPA" id="ENSG00000223648">
    <property type="expression patterns" value="Tissue enhanced (bone marrow, breast, intestine)"/>
</dbReference>
<dbReference type="neXtProt" id="NX_A0A075B6Q5"/>
<dbReference type="OpenTargets" id="ENSG00000223648"/>
<dbReference type="VEuPathDB" id="HostDB:ENSG00000223648"/>
<dbReference type="GeneTree" id="ENSGT01050000244871"/>
<dbReference type="HOGENOM" id="CLU_077975_5_2_1"/>
<dbReference type="InParanoid" id="A0A075B6Q5"/>
<dbReference type="OMA" id="QWVAWIR"/>
<dbReference type="OrthoDB" id="9945861at2759"/>
<dbReference type="PAN-GO" id="A0A075B6Q5">
    <property type="GO annotations" value="11 GO annotations based on evolutionary models"/>
</dbReference>
<dbReference type="PhylomeDB" id="A0A075B6Q5"/>
<dbReference type="SignaLink" id="A0A075B6Q5"/>
<dbReference type="Pharos" id="A0A075B6Q5">
    <property type="development level" value="Tdark"/>
</dbReference>
<dbReference type="PRO" id="PR:A0A075B6Q5"/>
<dbReference type="Proteomes" id="UP000005640">
    <property type="component" value="Chromosome 14"/>
</dbReference>
<dbReference type="RNAct" id="A0A075B6Q5">
    <property type="molecule type" value="protein"/>
</dbReference>
<dbReference type="Bgee" id="ENSG00000223648">
    <property type="expression patterns" value="Expressed in mucosa of transverse colon and 73 other cell types or tissues"/>
</dbReference>
<dbReference type="GO" id="GO:0005576">
    <property type="term" value="C:extracellular region"/>
    <property type="evidence" value="ECO:0007669"/>
    <property type="project" value="UniProtKB-SubCell"/>
</dbReference>
<dbReference type="GO" id="GO:0019814">
    <property type="term" value="C:immunoglobulin complex"/>
    <property type="evidence" value="ECO:0007669"/>
    <property type="project" value="UniProtKB-KW"/>
</dbReference>
<dbReference type="GO" id="GO:0005886">
    <property type="term" value="C:plasma membrane"/>
    <property type="evidence" value="ECO:0007669"/>
    <property type="project" value="UniProtKB-SubCell"/>
</dbReference>
<dbReference type="GO" id="GO:0003823">
    <property type="term" value="F:antigen binding"/>
    <property type="evidence" value="ECO:0000318"/>
    <property type="project" value="GO_Central"/>
</dbReference>
<dbReference type="GO" id="GO:0016064">
    <property type="term" value="P:immunoglobulin mediated immune response"/>
    <property type="evidence" value="ECO:0000318"/>
    <property type="project" value="GO_Central"/>
</dbReference>
<dbReference type="CDD" id="cd04981">
    <property type="entry name" value="IgV_H"/>
    <property type="match status" value="1"/>
</dbReference>
<dbReference type="FunFam" id="2.60.40.10:FF:000942">
    <property type="entry name" value="Immunoglobulin heavy variable 3-23"/>
    <property type="match status" value="1"/>
</dbReference>
<dbReference type="Gene3D" id="2.60.40.10">
    <property type="entry name" value="Immunoglobulins"/>
    <property type="match status" value="1"/>
</dbReference>
<dbReference type="InterPro" id="IPR007110">
    <property type="entry name" value="Ig-like_dom"/>
</dbReference>
<dbReference type="InterPro" id="IPR036179">
    <property type="entry name" value="Ig-like_dom_sf"/>
</dbReference>
<dbReference type="InterPro" id="IPR013783">
    <property type="entry name" value="Ig-like_fold"/>
</dbReference>
<dbReference type="InterPro" id="IPR013106">
    <property type="entry name" value="Ig_V-set"/>
</dbReference>
<dbReference type="InterPro" id="IPR050199">
    <property type="entry name" value="IgHV"/>
</dbReference>
<dbReference type="PANTHER" id="PTHR23266">
    <property type="entry name" value="IMMUNOGLOBULIN HEAVY CHAIN"/>
    <property type="match status" value="1"/>
</dbReference>
<dbReference type="Pfam" id="PF07686">
    <property type="entry name" value="V-set"/>
    <property type="match status" value="1"/>
</dbReference>
<dbReference type="SMART" id="SM00406">
    <property type="entry name" value="IGv"/>
    <property type="match status" value="1"/>
</dbReference>
<dbReference type="SUPFAM" id="SSF48726">
    <property type="entry name" value="Immunoglobulin"/>
    <property type="match status" value="1"/>
</dbReference>
<dbReference type="PROSITE" id="PS50835">
    <property type="entry name" value="IG_LIKE"/>
    <property type="match status" value="1"/>
</dbReference>
<accession>A0A075B6Q5</accession>
<protein>
    <recommendedName>
        <fullName evidence="4 9">Immunoglobulin heavy variable 3-64</fullName>
    </recommendedName>
</protein>
<reference key="1">
    <citation type="journal article" date="2003" name="Nature">
        <title>The DNA sequence and analysis of human chromosome 14.</title>
        <authorList>
            <person name="Heilig R."/>
            <person name="Eckenberg R."/>
            <person name="Petit J.-L."/>
            <person name="Fonknechten N."/>
            <person name="Da Silva C."/>
            <person name="Cattolico L."/>
            <person name="Levy M."/>
            <person name="Barbe V."/>
            <person name="De Berardinis V."/>
            <person name="Ureta-Vidal A."/>
            <person name="Pelletier E."/>
            <person name="Vico V."/>
            <person name="Anthouard V."/>
            <person name="Rowen L."/>
            <person name="Madan A."/>
            <person name="Qin S."/>
            <person name="Sun H."/>
            <person name="Du H."/>
            <person name="Pepin K."/>
            <person name="Artiguenave F."/>
            <person name="Robert C."/>
            <person name="Cruaud C."/>
            <person name="Bruels T."/>
            <person name="Jaillon O."/>
            <person name="Friedlander L."/>
            <person name="Samson G."/>
            <person name="Brottier P."/>
            <person name="Cure S."/>
            <person name="Segurens B."/>
            <person name="Aniere F."/>
            <person name="Samain S."/>
            <person name="Crespeau H."/>
            <person name="Abbasi N."/>
            <person name="Aiach N."/>
            <person name="Boscus D."/>
            <person name="Dickhoff R."/>
            <person name="Dors M."/>
            <person name="Dubois I."/>
            <person name="Friedman C."/>
            <person name="Gouyvenoux M."/>
            <person name="James R."/>
            <person name="Madan A."/>
            <person name="Mairey-Estrada B."/>
            <person name="Mangenot S."/>
            <person name="Martins N."/>
            <person name="Menard M."/>
            <person name="Oztas S."/>
            <person name="Ratcliffe A."/>
            <person name="Shaffer T."/>
            <person name="Trask B."/>
            <person name="Vacherie B."/>
            <person name="Bellemere C."/>
            <person name="Belser C."/>
            <person name="Besnard-Gonnet M."/>
            <person name="Bartol-Mavel D."/>
            <person name="Boutard M."/>
            <person name="Briez-Silla S."/>
            <person name="Combette S."/>
            <person name="Dufosse-Laurent V."/>
            <person name="Ferron C."/>
            <person name="Lechaplais C."/>
            <person name="Louesse C."/>
            <person name="Muselet D."/>
            <person name="Magdelenat G."/>
            <person name="Pateau E."/>
            <person name="Petit E."/>
            <person name="Sirvain-Trukniewicz P."/>
            <person name="Trybou A."/>
            <person name="Vega-Czarny N."/>
            <person name="Bataille E."/>
            <person name="Bluet E."/>
            <person name="Bordelais I."/>
            <person name="Dubois M."/>
            <person name="Dumont C."/>
            <person name="Guerin T."/>
            <person name="Haffray S."/>
            <person name="Hammadi R."/>
            <person name="Muanga J."/>
            <person name="Pellouin V."/>
            <person name="Robert D."/>
            <person name="Wunderle E."/>
            <person name="Gauguet G."/>
            <person name="Roy A."/>
            <person name="Sainte-Marthe L."/>
            <person name="Verdier J."/>
            <person name="Verdier-Discala C."/>
            <person name="Hillier L.W."/>
            <person name="Fulton L."/>
            <person name="McPherson J."/>
            <person name="Matsuda F."/>
            <person name="Wilson R."/>
            <person name="Scarpelli C."/>
            <person name="Gyapay G."/>
            <person name="Wincker P."/>
            <person name="Saurin W."/>
            <person name="Quetier F."/>
            <person name="Waterston R."/>
            <person name="Hood L."/>
            <person name="Weissenbach J."/>
        </authorList>
    </citation>
    <scope>NUCLEOTIDE SEQUENCE [LARGE SCALE GENOMIC DNA] (IMGT ALLELE IGHV3-64*02)</scope>
</reference>
<reference key="2">
    <citation type="journal article" date="2001" name="Exp. Clin. Immunogenet.">
        <title>Nomenclature of the human immunoglobulin heavy (IGH) genes.</title>
        <authorList>
            <person name="Lefranc M.P."/>
        </authorList>
    </citation>
    <scope>NOMENCLATURE</scope>
</reference>
<reference key="3">
    <citation type="book" date="2001" name="The Immunoglobulin FactsBook.">
        <title>The Immunoglobulin FactsBook.</title>
        <editorList>
            <person name="Lefranc M.P."/>
            <person name="Lefranc G."/>
        </editorList>
        <authorList>
            <person name="Lefranc M.P."/>
            <person name="Lefranc G."/>
        </authorList>
    </citation>
    <scope>NOMENCLATURE</scope>
</reference>
<reference key="4">
    <citation type="journal article" date="2007" name="Annu. Rev. Genet.">
        <title>Immunoglobulin somatic hypermutation.</title>
        <authorList>
            <person name="Teng G."/>
            <person name="Papavasiliou F.N."/>
        </authorList>
    </citation>
    <scope>REVIEW ON SOMATIC HYPERMUTATION</scope>
</reference>
<reference key="5">
    <citation type="journal article" date="2010" name="J. Allergy Clin. Immunol.">
        <title>Structure and function of immunoglobulins.</title>
        <authorList>
            <person name="Schroeder H.W. Jr."/>
            <person name="Cavacini L."/>
        </authorList>
    </citation>
    <scope>REVIEW ON IMMUNOGLOBULINS</scope>
</reference>
<reference key="6">
    <citation type="journal article" date="2012" name="Nat. Rev. Immunol.">
        <title>Molecular programming of B cell memory.</title>
        <authorList>
            <person name="McHeyzer-Williams M."/>
            <person name="Okitsu S."/>
            <person name="Wang N."/>
            <person name="McHeyzer-Williams L."/>
        </authorList>
    </citation>
    <scope>REVIEW ON FUNCTION</scope>
</reference>
<reference key="7">
    <citation type="journal article" date="2014" name="Front. Immunol.">
        <title>Immunoglobulin and T Cell Receptor Genes: IMGT((R)) and the Birth and Rise of Immunoinformatics.</title>
        <authorList>
            <person name="Lefranc M.P."/>
        </authorList>
    </citation>
    <scope>NOMENCLATURE</scope>
</reference>
<evidence type="ECO:0000250" key="1">
    <source>
        <dbReference type="UniProtKB" id="P23083"/>
    </source>
</evidence>
<evidence type="ECO:0000255" key="2"/>
<evidence type="ECO:0000255" key="3">
    <source>
        <dbReference type="PROSITE-ProRule" id="PRU00114"/>
    </source>
</evidence>
<evidence type="ECO:0000303" key="4">
    <source>
    </source>
</evidence>
<evidence type="ECO:0000303" key="5">
    <source>
    </source>
</evidence>
<evidence type="ECO:0000303" key="6">
    <source>
    </source>
</evidence>
<evidence type="ECO:0000303" key="7">
    <source>
    </source>
</evidence>
<evidence type="ECO:0000303" key="8">
    <source>
    </source>
</evidence>
<evidence type="ECO:0000303" key="9">
    <source ref="3"/>
</evidence>
<evidence type="ECO:0000305" key="10"/>
<comment type="function">
    <text evidence="5 6 7 8">V region of the variable domain of immunoglobulin heavy chains that participates in the antigen recognition (PubMed:24600447). Immunoglobulins, also known as antibodies, are membrane-bound or secreted glycoproteins produced by B lymphocytes. In the recognition phase of humoral immunity, the membrane-bound immunoglobulins serve as receptors which, upon binding of a specific antigen, trigger the clonal expansion and differentiation of B lymphocytes into immunoglobulins-secreting plasma cells. Secreted immunoglobulins mediate the effector phase of humoral immunity, which results in the elimination of bound antigens (PubMed:20176268, PubMed:22158414). The antigen binding site is formed by the variable domain of one heavy chain, together with that of its associated light chain. Thus, each immunoglobulin has two antigen binding sites with remarkable affinity for a particular antigen. The variable domains are assembled by a process called V-(D)-J rearrangement and can then be subjected to somatic hypermutations which, after exposure to antigen and selection, allow affinity maturation for a particular antigen (PubMed:17576170, PubMed:20176268).</text>
</comment>
<comment type="subunit">
    <text evidence="6">Immunoglobulins are composed of two identical heavy chains and two identical light chains; disulfide-linked.</text>
</comment>
<comment type="subcellular location">
    <subcellularLocation>
        <location evidence="6 7">Secreted</location>
    </subcellularLocation>
    <subcellularLocation>
        <location evidence="6 7">Cell membrane</location>
    </subcellularLocation>
</comment>
<comment type="polymorphism">
    <text evidence="10">There are several alleles. The sequence shown is that of IMGT allele IGHV3-64*02.</text>
</comment>
<comment type="caution">
    <text evidence="10">For examples of full-length immunoglobulin heavy chains (of different isotypes) see AC P0DOX2, AC P0DOX3, AC P0DOX4, AC P0DOX5 and AC P0DOX6.</text>
</comment>